<sequence length="137" mass="15525">MLQPKRTKYRKVHKGRNEGLSWSANAVSFGEYGLKATAHGQLTARQIEAARRSISRYVKRGGKMWIRVFPDKPITKKPIEVRMGSGKGNVEYWVAQIQPGRMIYEIEGVTEDVAREAFRLAAAKLSVTTTFVTRTVR</sequence>
<accession>B4SKX0</accession>
<feature type="chain" id="PRO_1000143033" description="Large ribosomal subunit protein uL16">
    <location>
        <begin position="1"/>
        <end position="137"/>
    </location>
</feature>
<comment type="function">
    <text evidence="1">Binds 23S rRNA and is also seen to make contacts with the A and possibly P site tRNAs.</text>
</comment>
<comment type="subunit">
    <text evidence="1">Part of the 50S ribosomal subunit.</text>
</comment>
<comment type="similarity">
    <text evidence="1">Belongs to the universal ribosomal protein uL16 family.</text>
</comment>
<dbReference type="EMBL" id="CP001111">
    <property type="protein sequence ID" value="ACF50468.1"/>
    <property type="molecule type" value="Genomic_DNA"/>
</dbReference>
<dbReference type="RefSeq" id="WP_004145352.1">
    <property type="nucleotide sequence ID" value="NC_011071.1"/>
</dbReference>
<dbReference type="SMR" id="B4SKX0"/>
<dbReference type="STRING" id="391008.Smal_0763"/>
<dbReference type="KEGG" id="smt:Smal_0763"/>
<dbReference type="eggNOG" id="COG0197">
    <property type="taxonomic scope" value="Bacteria"/>
</dbReference>
<dbReference type="HOGENOM" id="CLU_078858_2_1_6"/>
<dbReference type="OrthoDB" id="9802589at2"/>
<dbReference type="Proteomes" id="UP000001867">
    <property type="component" value="Chromosome"/>
</dbReference>
<dbReference type="GO" id="GO:0022625">
    <property type="term" value="C:cytosolic large ribosomal subunit"/>
    <property type="evidence" value="ECO:0007669"/>
    <property type="project" value="TreeGrafter"/>
</dbReference>
<dbReference type="GO" id="GO:0019843">
    <property type="term" value="F:rRNA binding"/>
    <property type="evidence" value="ECO:0007669"/>
    <property type="project" value="UniProtKB-UniRule"/>
</dbReference>
<dbReference type="GO" id="GO:0003735">
    <property type="term" value="F:structural constituent of ribosome"/>
    <property type="evidence" value="ECO:0007669"/>
    <property type="project" value="InterPro"/>
</dbReference>
<dbReference type="GO" id="GO:0000049">
    <property type="term" value="F:tRNA binding"/>
    <property type="evidence" value="ECO:0007669"/>
    <property type="project" value="UniProtKB-KW"/>
</dbReference>
<dbReference type="GO" id="GO:0006412">
    <property type="term" value="P:translation"/>
    <property type="evidence" value="ECO:0007669"/>
    <property type="project" value="UniProtKB-UniRule"/>
</dbReference>
<dbReference type="CDD" id="cd01433">
    <property type="entry name" value="Ribosomal_L16_L10e"/>
    <property type="match status" value="1"/>
</dbReference>
<dbReference type="FunFam" id="3.90.1170.10:FF:000001">
    <property type="entry name" value="50S ribosomal protein L16"/>
    <property type="match status" value="1"/>
</dbReference>
<dbReference type="Gene3D" id="3.90.1170.10">
    <property type="entry name" value="Ribosomal protein L10e/L16"/>
    <property type="match status" value="1"/>
</dbReference>
<dbReference type="HAMAP" id="MF_01342">
    <property type="entry name" value="Ribosomal_uL16"/>
    <property type="match status" value="1"/>
</dbReference>
<dbReference type="InterPro" id="IPR047873">
    <property type="entry name" value="Ribosomal_uL16"/>
</dbReference>
<dbReference type="InterPro" id="IPR000114">
    <property type="entry name" value="Ribosomal_uL16_bact-type"/>
</dbReference>
<dbReference type="InterPro" id="IPR020798">
    <property type="entry name" value="Ribosomal_uL16_CS"/>
</dbReference>
<dbReference type="InterPro" id="IPR016180">
    <property type="entry name" value="Ribosomal_uL16_dom"/>
</dbReference>
<dbReference type="InterPro" id="IPR036920">
    <property type="entry name" value="Ribosomal_uL16_sf"/>
</dbReference>
<dbReference type="NCBIfam" id="TIGR01164">
    <property type="entry name" value="rplP_bact"/>
    <property type="match status" value="1"/>
</dbReference>
<dbReference type="PANTHER" id="PTHR12220">
    <property type="entry name" value="50S/60S RIBOSOMAL PROTEIN L16"/>
    <property type="match status" value="1"/>
</dbReference>
<dbReference type="PANTHER" id="PTHR12220:SF13">
    <property type="entry name" value="LARGE RIBOSOMAL SUBUNIT PROTEIN UL16M"/>
    <property type="match status" value="1"/>
</dbReference>
<dbReference type="Pfam" id="PF00252">
    <property type="entry name" value="Ribosomal_L16"/>
    <property type="match status" value="1"/>
</dbReference>
<dbReference type="PRINTS" id="PR00060">
    <property type="entry name" value="RIBOSOMALL16"/>
</dbReference>
<dbReference type="SUPFAM" id="SSF54686">
    <property type="entry name" value="Ribosomal protein L16p/L10e"/>
    <property type="match status" value="1"/>
</dbReference>
<dbReference type="PROSITE" id="PS00586">
    <property type="entry name" value="RIBOSOMAL_L16_1"/>
    <property type="match status" value="1"/>
</dbReference>
<dbReference type="PROSITE" id="PS00701">
    <property type="entry name" value="RIBOSOMAL_L16_2"/>
    <property type="match status" value="1"/>
</dbReference>
<proteinExistence type="inferred from homology"/>
<organism>
    <name type="scientific">Stenotrophomonas maltophilia (strain R551-3)</name>
    <dbReference type="NCBI Taxonomy" id="391008"/>
    <lineage>
        <taxon>Bacteria</taxon>
        <taxon>Pseudomonadati</taxon>
        <taxon>Pseudomonadota</taxon>
        <taxon>Gammaproteobacteria</taxon>
        <taxon>Lysobacterales</taxon>
        <taxon>Lysobacteraceae</taxon>
        <taxon>Stenotrophomonas</taxon>
        <taxon>Stenotrophomonas maltophilia group</taxon>
    </lineage>
</organism>
<evidence type="ECO:0000255" key="1">
    <source>
        <dbReference type="HAMAP-Rule" id="MF_01342"/>
    </source>
</evidence>
<evidence type="ECO:0000305" key="2"/>
<name>RL16_STRM5</name>
<keyword id="KW-0687">Ribonucleoprotein</keyword>
<keyword id="KW-0689">Ribosomal protein</keyword>
<keyword id="KW-0694">RNA-binding</keyword>
<keyword id="KW-0699">rRNA-binding</keyword>
<keyword id="KW-0820">tRNA-binding</keyword>
<gene>
    <name evidence="1" type="primary">rplP</name>
    <name type="ordered locus">Smal_0763</name>
</gene>
<reference key="1">
    <citation type="submission" date="2008-06" db="EMBL/GenBank/DDBJ databases">
        <title>Complete sequence of Stenotrophomonas maltophilia R551-3.</title>
        <authorList>
            <consortium name="US DOE Joint Genome Institute"/>
            <person name="Lucas S."/>
            <person name="Copeland A."/>
            <person name="Lapidus A."/>
            <person name="Glavina del Rio T."/>
            <person name="Dalin E."/>
            <person name="Tice H."/>
            <person name="Pitluck S."/>
            <person name="Chain P."/>
            <person name="Malfatti S."/>
            <person name="Shin M."/>
            <person name="Vergez L."/>
            <person name="Lang D."/>
            <person name="Schmutz J."/>
            <person name="Larimer F."/>
            <person name="Land M."/>
            <person name="Hauser L."/>
            <person name="Kyrpides N."/>
            <person name="Mikhailova N."/>
            <person name="Taghavi S."/>
            <person name="Monchy S."/>
            <person name="Newman L."/>
            <person name="Vangronsveld J."/>
            <person name="van der Lelie D."/>
            <person name="Richardson P."/>
        </authorList>
    </citation>
    <scope>NUCLEOTIDE SEQUENCE [LARGE SCALE GENOMIC DNA]</scope>
    <source>
        <strain>R551-3</strain>
    </source>
</reference>
<protein>
    <recommendedName>
        <fullName evidence="1">Large ribosomal subunit protein uL16</fullName>
    </recommendedName>
    <alternativeName>
        <fullName evidence="2">50S ribosomal protein L16</fullName>
    </alternativeName>
</protein>